<dbReference type="EMBL" id="AB022277">
    <property type="protein sequence ID" value="BAA84949.1"/>
    <property type="molecule type" value="mRNA"/>
</dbReference>
<dbReference type="EMBL" id="AF195116">
    <property type="protein sequence ID" value="AAF08931.1"/>
    <property type="molecule type" value="mRNA"/>
</dbReference>
<dbReference type="EMBL" id="AF195117">
    <property type="protein sequence ID" value="AAF08932.1"/>
    <property type="molecule type" value="mRNA"/>
</dbReference>
<dbReference type="EMBL" id="AK312918">
    <property type="protein sequence ID" value="BAG35763.1"/>
    <property type="molecule type" value="mRNA"/>
</dbReference>
<dbReference type="EMBL" id="AL359380">
    <property type="status" value="NOT_ANNOTATED_CDS"/>
    <property type="molecule type" value="Genomic_DNA"/>
</dbReference>
<dbReference type="EMBL" id="AL589946">
    <property type="status" value="NOT_ANNOTATED_CDS"/>
    <property type="molecule type" value="Genomic_DNA"/>
</dbReference>
<dbReference type="EMBL" id="CH471081">
    <property type="protein sequence ID" value="EAX04437.1"/>
    <property type="molecule type" value="Genomic_DNA"/>
</dbReference>
<dbReference type="CCDS" id="CCDS4955.1">
    <molecule id="Q9UJW2-1"/>
</dbReference>
<dbReference type="PIR" id="JC7189">
    <property type="entry name" value="JC7189"/>
</dbReference>
<dbReference type="RefSeq" id="NP_055279.3">
    <molecule id="Q9UJW2-1"/>
    <property type="nucleotide sequence ID" value="NM_014464.3"/>
</dbReference>
<dbReference type="SMR" id="Q9UJW2"/>
<dbReference type="BioGRID" id="118107">
    <property type="interactions" value="75"/>
</dbReference>
<dbReference type="FunCoup" id="Q9UJW2">
    <property type="interactions" value="52"/>
</dbReference>
<dbReference type="IntAct" id="Q9UJW2">
    <property type="interactions" value="26"/>
</dbReference>
<dbReference type="STRING" id="9606.ENSP00000259782"/>
<dbReference type="MEROPS" id="C01.973"/>
<dbReference type="GlyCosmos" id="Q9UJW2">
    <property type="glycosylation" value="6 sites, 2 glycans"/>
</dbReference>
<dbReference type="GlyGen" id="Q9UJW2">
    <property type="glycosylation" value="6 sites, 45 N-linked glycans (3 sites), 2 O-linked glycans (1 site)"/>
</dbReference>
<dbReference type="iPTMnet" id="Q9UJW2"/>
<dbReference type="PhosphoSitePlus" id="Q9UJW2"/>
<dbReference type="BioMuta" id="TINAG"/>
<dbReference type="DMDM" id="317373501"/>
<dbReference type="MassIVE" id="Q9UJW2"/>
<dbReference type="PaxDb" id="9606-ENSP00000259782"/>
<dbReference type="PeptideAtlas" id="Q9UJW2"/>
<dbReference type="ProteomicsDB" id="84670">
    <molecule id="Q9UJW2-1"/>
</dbReference>
<dbReference type="ProteomicsDB" id="84671">
    <molecule id="Q9UJW2-2"/>
</dbReference>
<dbReference type="ABCD" id="Q9UJW2">
    <property type="antibodies" value="4 sequenced antibodies"/>
</dbReference>
<dbReference type="Antibodypedia" id="31018">
    <property type="antibodies" value="74 antibodies from 20 providers"/>
</dbReference>
<dbReference type="DNASU" id="27283"/>
<dbReference type="Ensembl" id="ENST00000259782.9">
    <molecule id="Q9UJW2-1"/>
    <property type="protein sequence ID" value="ENSP00000259782.4"/>
    <property type="gene ID" value="ENSG00000137251.16"/>
</dbReference>
<dbReference type="GeneID" id="27283"/>
<dbReference type="KEGG" id="hsa:27283"/>
<dbReference type="MANE-Select" id="ENST00000259782.9">
    <property type="protein sequence ID" value="ENSP00000259782.4"/>
    <property type="RefSeq nucleotide sequence ID" value="NM_014464.4"/>
    <property type="RefSeq protein sequence ID" value="NP_055279.3"/>
</dbReference>
<dbReference type="UCSC" id="uc003pcj.3">
    <molecule id="Q9UJW2-1"/>
    <property type="organism name" value="human"/>
</dbReference>
<dbReference type="AGR" id="HGNC:14599"/>
<dbReference type="CTD" id="27283"/>
<dbReference type="DisGeNET" id="27283"/>
<dbReference type="GeneCards" id="TINAG"/>
<dbReference type="HGNC" id="HGNC:14599">
    <property type="gene designation" value="TINAG"/>
</dbReference>
<dbReference type="HPA" id="ENSG00000137251">
    <property type="expression patterns" value="Tissue enriched (kidney)"/>
</dbReference>
<dbReference type="MIM" id="606749">
    <property type="type" value="gene"/>
</dbReference>
<dbReference type="neXtProt" id="NX_Q9UJW2"/>
<dbReference type="OpenTargets" id="ENSG00000137251"/>
<dbReference type="PharmGKB" id="PA37905"/>
<dbReference type="VEuPathDB" id="HostDB:ENSG00000137251"/>
<dbReference type="eggNOG" id="KOG1544">
    <property type="taxonomic scope" value="Eukaryota"/>
</dbReference>
<dbReference type="GeneTree" id="ENSGT00940000161065"/>
<dbReference type="HOGENOM" id="CLU_012184_3_2_1"/>
<dbReference type="InParanoid" id="Q9UJW2"/>
<dbReference type="OMA" id="HTNGPCP"/>
<dbReference type="OrthoDB" id="190265at2759"/>
<dbReference type="PAN-GO" id="Q9UJW2">
    <property type="GO annotations" value="2 GO annotations based on evolutionary models"/>
</dbReference>
<dbReference type="PhylomeDB" id="Q9UJW2"/>
<dbReference type="TreeFam" id="TF313765"/>
<dbReference type="PathwayCommons" id="Q9UJW2"/>
<dbReference type="SignaLink" id="Q9UJW2"/>
<dbReference type="BioGRID-ORCS" id="27283">
    <property type="hits" value="16 hits in 1146 CRISPR screens"/>
</dbReference>
<dbReference type="GeneWiki" id="TINAG"/>
<dbReference type="GenomeRNAi" id="27283"/>
<dbReference type="Pharos" id="Q9UJW2">
    <property type="development level" value="Tbio"/>
</dbReference>
<dbReference type="PRO" id="PR:Q9UJW2"/>
<dbReference type="Proteomes" id="UP000005640">
    <property type="component" value="Chromosome 6"/>
</dbReference>
<dbReference type="RNAct" id="Q9UJW2">
    <property type="molecule type" value="protein"/>
</dbReference>
<dbReference type="Bgee" id="ENSG00000137251">
    <property type="expression patterns" value="Expressed in kidney epithelium and 53 other cell types or tissues"/>
</dbReference>
<dbReference type="ExpressionAtlas" id="Q9UJW2">
    <property type="expression patterns" value="baseline and differential"/>
</dbReference>
<dbReference type="GO" id="GO:0005604">
    <property type="term" value="C:basement membrane"/>
    <property type="evidence" value="ECO:0000314"/>
    <property type="project" value="UniProtKB"/>
</dbReference>
<dbReference type="GO" id="GO:0005615">
    <property type="term" value="C:extracellular space"/>
    <property type="evidence" value="ECO:0000318"/>
    <property type="project" value="GO_Central"/>
</dbReference>
<dbReference type="GO" id="GO:0005764">
    <property type="term" value="C:lysosome"/>
    <property type="evidence" value="ECO:0000318"/>
    <property type="project" value="GO_Central"/>
</dbReference>
<dbReference type="GO" id="GO:0004197">
    <property type="term" value="F:cysteine-type endopeptidase activity"/>
    <property type="evidence" value="ECO:0000304"/>
    <property type="project" value="ProtInc"/>
</dbReference>
<dbReference type="GO" id="GO:0000166">
    <property type="term" value="F:nucleotide binding"/>
    <property type="evidence" value="ECO:0000304"/>
    <property type="project" value="ProtInc"/>
</dbReference>
<dbReference type="GO" id="GO:0007155">
    <property type="term" value="P:cell adhesion"/>
    <property type="evidence" value="ECO:0000314"/>
    <property type="project" value="UniProtKB"/>
</dbReference>
<dbReference type="GO" id="GO:0006508">
    <property type="term" value="P:proteolysis"/>
    <property type="evidence" value="ECO:0007669"/>
    <property type="project" value="InterPro"/>
</dbReference>
<dbReference type="CDD" id="cd02620">
    <property type="entry name" value="Peptidase_C1A_CathepsinB"/>
    <property type="match status" value="1"/>
</dbReference>
<dbReference type="FunFam" id="3.90.70.10:FF:000037">
    <property type="entry name" value="Tubulointerstitial nephritis antigen-like 1"/>
    <property type="match status" value="1"/>
</dbReference>
<dbReference type="Gene3D" id="3.90.70.10">
    <property type="entry name" value="Cysteine proteinases"/>
    <property type="match status" value="1"/>
</dbReference>
<dbReference type="InterPro" id="IPR038765">
    <property type="entry name" value="Papain-like_cys_pep_sf"/>
</dbReference>
<dbReference type="InterPro" id="IPR025661">
    <property type="entry name" value="Pept_asp_AS"/>
</dbReference>
<dbReference type="InterPro" id="IPR013128">
    <property type="entry name" value="Peptidase_C1A"/>
</dbReference>
<dbReference type="InterPro" id="IPR000668">
    <property type="entry name" value="Peptidase_C1A_C"/>
</dbReference>
<dbReference type="InterPro" id="IPR001212">
    <property type="entry name" value="Somatomedin_B_dom"/>
</dbReference>
<dbReference type="PANTHER" id="PTHR12411">
    <property type="entry name" value="CYSTEINE PROTEASE FAMILY C1-RELATED"/>
    <property type="match status" value="1"/>
</dbReference>
<dbReference type="Pfam" id="PF00112">
    <property type="entry name" value="Peptidase_C1"/>
    <property type="match status" value="1"/>
</dbReference>
<dbReference type="SMART" id="SM00645">
    <property type="entry name" value="Pept_C1"/>
    <property type="match status" value="1"/>
</dbReference>
<dbReference type="SMART" id="SM00201">
    <property type="entry name" value="SO"/>
    <property type="match status" value="1"/>
</dbReference>
<dbReference type="SUPFAM" id="SSF54001">
    <property type="entry name" value="Cysteine proteinases"/>
    <property type="match status" value="1"/>
</dbReference>
<dbReference type="PROSITE" id="PS00524">
    <property type="entry name" value="SMB_1"/>
    <property type="match status" value="1"/>
</dbReference>
<dbReference type="PROSITE" id="PS50958">
    <property type="entry name" value="SMB_2"/>
    <property type="match status" value="1"/>
</dbReference>
<dbReference type="PROSITE" id="PS00640">
    <property type="entry name" value="THIOL_PROTEASE_ASN"/>
    <property type="match status" value="1"/>
</dbReference>
<proteinExistence type="evidence at protein level"/>
<evidence type="ECO:0000255" key="1"/>
<evidence type="ECO:0000255" key="2">
    <source>
        <dbReference type="PROSITE-ProRule" id="PRU00350"/>
    </source>
</evidence>
<evidence type="ECO:0000255" key="3">
    <source>
        <dbReference type="PROSITE-ProRule" id="PRU10090"/>
    </source>
</evidence>
<evidence type="ECO:0000269" key="4">
    <source>
    </source>
</evidence>
<evidence type="ECO:0000269" key="5">
    <source>
    </source>
</evidence>
<evidence type="ECO:0000269" key="6">
    <source>
    </source>
</evidence>
<evidence type="ECO:0000269" key="7">
    <source>
    </source>
</evidence>
<evidence type="ECO:0000269" key="8">
    <source>
    </source>
</evidence>
<evidence type="ECO:0000269" key="9">
    <source>
    </source>
</evidence>
<evidence type="ECO:0000303" key="10">
    <source>
    </source>
</evidence>
<evidence type="ECO:0000305" key="11"/>
<evidence type="ECO:0000312" key="12">
    <source>
        <dbReference type="EMBL" id="AAF08931.1"/>
    </source>
</evidence>
<accession>Q9UJW2</accession>
<accession>Q5T467</accession>
<accession>Q9UJW1</accession>
<accession>Q9ULZ4</accession>
<reference evidence="11" key="1">
    <citation type="journal article" date="2000" name="Biochem. Biophys. Res. Commun.">
        <title>Molecular cloning, expression, and chromosomal localization of a human tubulointerstitial nephritis antigen.</title>
        <authorList>
            <person name="Ikeda M."/>
            <person name="Takemura T."/>
            <person name="Hino S."/>
            <person name="Yoshioka K."/>
        </authorList>
    </citation>
    <scope>NUCLEOTIDE SEQUENCE [MRNA] (ISOFORM 1)</scope>
    <scope>TISSUE SPECIFICITY</scope>
    <scope>VARIANT PRO-158</scope>
    <source>
        <tissue evidence="4">Kidney</tissue>
    </source>
</reference>
<reference evidence="11" key="2">
    <citation type="journal article" date="2000" name="J. Am. Soc. Nephrol.">
        <title>Identification of two alternatively spliced forms of human tubulointerstitial nephritis antigen (TIN-Ag).</title>
        <authorList>
            <person name="Zhou B."/>
            <person name="Nelson T.R."/>
            <person name="Kashtan C."/>
            <person name="Gleason B."/>
            <person name="Michael A.F."/>
            <person name="Vlassi M."/>
            <person name="Charonis A.S."/>
        </authorList>
    </citation>
    <scope>NUCLEOTIDE SEQUENCE [MRNA] (ISOFORMS 1 AND 2)</scope>
    <scope>TISSUE SPECIFICITY</scope>
    <scope>SUBCELLULAR LOCATION</scope>
    <scope>VARIANT PRO-158</scope>
    <source>
        <tissue evidence="5">Kidney</tissue>
    </source>
</reference>
<reference key="3">
    <citation type="journal article" date="2004" name="Nat. Genet.">
        <title>Complete sequencing and characterization of 21,243 full-length human cDNAs.</title>
        <authorList>
            <person name="Ota T."/>
            <person name="Suzuki Y."/>
            <person name="Nishikawa T."/>
            <person name="Otsuki T."/>
            <person name="Sugiyama T."/>
            <person name="Irie R."/>
            <person name="Wakamatsu A."/>
            <person name="Hayashi K."/>
            <person name="Sato H."/>
            <person name="Nagai K."/>
            <person name="Kimura K."/>
            <person name="Makita H."/>
            <person name="Sekine M."/>
            <person name="Obayashi M."/>
            <person name="Nishi T."/>
            <person name="Shibahara T."/>
            <person name="Tanaka T."/>
            <person name="Ishii S."/>
            <person name="Yamamoto J."/>
            <person name="Saito K."/>
            <person name="Kawai Y."/>
            <person name="Isono Y."/>
            <person name="Nakamura Y."/>
            <person name="Nagahari K."/>
            <person name="Murakami K."/>
            <person name="Yasuda T."/>
            <person name="Iwayanagi T."/>
            <person name="Wagatsuma M."/>
            <person name="Shiratori A."/>
            <person name="Sudo H."/>
            <person name="Hosoiri T."/>
            <person name="Kaku Y."/>
            <person name="Kodaira H."/>
            <person name="Kondo H."/>
            <person name="Sugawara M."/>
            <person name="Takahashi M."/>
            <person name="Kanda K."/>
            <person name="Yokoi T."/>
            <person name="Furuya T."/>
            <person name="Kikkawa E."/>
            <person name="Omura Y."/>
            <person name="Abe K."/>
            <person name="Kamihara K."/>
            <person name="Katsuta N."/>
            <person name="Sato K."/>
            <person name="Tanikawa M."/>
            <person name="Yamazaki M."/>
            <person name="Ninomiya K."/>
            <person name="Ishibashi T."/>
            <person name="Yamashita H."/>
            <person name="Murakawa K."/>
            <person name="Fujimori K."/>
            <person name="Tanai H."/>
            <person name="Kimata M."/>
            <person name="Watanabe M."/>
            <person name="Hiraoka S."/>
            <person name="Chiba Y."/>
            <person name="Ishida S."/>
            <person name="Ono Y."/>
            <person name="Takiguchi S."/>
            <person name="Watanabe S."/>
            <person name="Yosida M."/>
            <person name="Hotuta T."/>
            <person name="Kusano J."/>
            <person name="Kanehori K."/>
            <person name="Takahashi-Fujii A."/>
            <person name="Hara H."/>
            <person name="Tanase T.-O."/>
            <person name="Nomura Y."/>
            <person name="Togiya S."/>
            <person name="Komai F."/>
            <person name="Hara R."/>
            <person name="Takeuchi K."/>
            <person name="Arita M."/>
            <person name="Imose N."/>
            <person name="Musashino K."/>
            <person name="Yuuki H."/>
            <person name="Oshima A."/>
            <person name="Sasaki N."/>
            <person name="Aotsuka S."/>
            <person name="Yoshikawa Y."/>
            <person name="Matsunawa H."/>
            <person name="Ichihara T."/>
            <person name="Shiohata N."/>
            <person name="Sano S."/>
            <person name="Moriya S."/>
            <person name="Momiyama H."/>
            <person name="Satoh N."/>
            <person name="Takami S."/>
            <person name="Terashima Y."/>
            <person name="Suzuki O."/>
            <person name="Nakagawa S."/>
            <person name="Senoh A."/>
            <person name="Mizoguchi H."/>
            <person name="Goto Y."/>
            <person name="Shimizu F."/>
            <person name="Wakebe H."/>
            <person name="Hishigaki H."/>
            <person name="Watanabe T."/>
            <person name="Sugiyama A."/>
            <person name="Takemoto M."/>
            <person name="Kawakami B."/>
            <person name="Yamazaki M."/>
            <person name="Watanabe K."/>
            <person name="Kumagai A."/>
            <person name="Itakura S."/>
            <person name="Fukuzumi Y."/>
            <person name="Fujimori Y."/>
            <person name="Komiyama M."/>
            <person name="Tashiro H."/>
            <person name="Tanigami A."/>
            <person name="Fujiwara T."/>
            <person name="Ono T."/>
            <person name="Yamada K."/>
            <person name="Fujii Y."/>
            <person name="Ozaki K."/>
            <person name="Hirao M."/>
            <person name="Ohmori Y."/>
            <person name="Kawabata A."/>
            <person name="Hikiji T."/>
            <person name="Kobatake N."/>
            <person name="Inagaki H."/>
            <person name="Ikema Y."/>
            <person name="Okamoto S."/>
            <person name="Okitani R."/>
            <person name="Kawakami T."/>
            <person name="Noguchi S."/>
            <person name="Itoh T."/>
            <person name="Shigeta K."/>
            <person name="Senba T."/>
            <person name="Matsumura K."/>
            <person name="Nakajima Y."/>
            <person name="Mizuno T."/>
            <person name="Morinaga M."/>
            <person name="Sasaki M."/>
            <person name="Togashi T."/>
            <person name="Oyama M."/>
            <person name="Hata H."/>
            <person name="Watanabe M."/>
            <person name="Komatsu T."/>
            <person name="Mizushima-Sugano J."/>
            <person name="Satoh T."/>
            <person name="Shirai Y."/>
            <person name="Takahashi Y."/>
            <person name="Nakagawa K."/>
            <person name="Okumura K."/>
            <person name="Nagase T."/>
            <person name="Nomura N."/>
            <person name="Kikuchi H."/>
            <person name="Masuho Y."/>
            <person name="Yamashita R."/>
            <person name="Nakai K."/>
            <person name="Yada T."/>
            <person name="Nakamura Y."/>
            <person name="Ohara O."/>
            <person name="Isogai T."/>
            <person name="Sugano S."/>
        </authorList>
    </citation>
    <scope>NUCLEOTIDE SEQUENCE [LARGE SCALE MRNA] (ISOFORM 1)</scope>
    <source>
        <tissue>Kidney</tissue>
    </source>
</reference>
<reference key="4">
    <citation type="journal article" date="2003" name="Nature">
        <title>The DNA sequence and analysis of human chromosome 6.</title>
        <authorList>
            <person name="Mungall A.J."/>
            <person name="Palmer S.A."/>
            <person name="Sims S.K."/>
            <person name="Edwards C.A."/>
            <person name="Ashurst J.L."/>
            <person name="Wilming L."/>
            <person name="Jones M.C."/>
            <person name="Horton R."/>
            <person name="Hunt S.E."/>
            <person name="Scott C.E."/>
            <person name="Gilbert J.G.R."/>
            <person name="Clamp M.E."/>
            <person name="Bethel G."/>
            <person name="Milne S."/>
            <person name="Ainscough R."/>
            <person name="Almeida J.P."/>
            <person name="Ambrose K.D."/>
            <person name="Andrews T.D."/>
            <person name="Ashwell R.I.S."/>
            <person name="Babbage A.K."/>
            <person name="Bagguley C.L."/>
            <person name="Bailey J."/>
            <person name="Banerjee R."/>
            <person name="Barker D.J."/>
            <person name="Barlow K.F."/>
            <person name="Bates K."/>
            <person name="Beare D.M."/>
            <person name="Beasley H."/>
            <person name="Beasley O."/>
            <person name="Bird C.P."/>
            <person name="Blakey S.E."/>
            <person name="Bray-Allen S."/>
            <person name="Brook J."/>
            <person name="Brown A.J."/>
            <person name="Brown J.Y."/>
            <person name="Burford D.C."/>
            <person name="Burrill W."/>
            <person name="Burton J."/>
            <person name="Carder C."/>
            <person name="Carter N.P."/>
            <person name="Chapman J.C."/>
            <person name="Clark S.Y."/>
            <person name="Clark G."/>
            <person name="Clee C.M."/>
            <person name="Clegg S."/>
            <person name="Cobley V."/>
            <person name="Collier R.E."/>
            <person name="Collins J.E."/>
            <person name="Colman L.K."/>
            <person name="Corby N.R."/>
            <person name="Coville G.J."/>
            <person name="Culley K.M."/>
            <person name="Dhami P."/>
            <person name="Davies J."/>
            <person name="Dunn M."/>
            <person name="Earthrowl M.E."/>
            <person name="Ellington A.E."/>
            <person name="Evans K.A."/>
            <person name="Faulkner L."/>
            <person name="Francis M.D."/>
            <person name="Frankish A."/>
            <person name="Frankland J."/>
            <person name="French L."/>
            <person name="Garner P."/>
            <person name="Garnett J."/>
            <person name="Ghori M.J."/>
            <person name="Gilby L.M."/>
            <person name="Gillson C.J."/>
            <person name="Glithero R.J."/>
            <person name="Grafham D.V."/>
            <person name="Grant M."/>
            <person name="Gribble S."/>
            <person name="Griffiths C."/>
            <person name="Griffiths M.N.D."/>
            <person name="Hall R."/>
            <person name="Halls K.S."/>
            <person name="Hammond S."/>
            <person name="Harley J.L."/>
            <person name="Hart E.A."/>
            <person name="Heath P.D."/>
            <person name="Heathcott R."/>
            <person name="Holmes S.J."/>
            <person name="Howden P.J."/>
            <person name="Howe K.L."/>
            <person name="Howell G.R."/>
            <person name="Huckle E."/>
            <person name="Humphray S.J."/>
            <person name="Humphries M.D."/>
            <person name="Hunt A.R."/>
            <person name="Johnson C.M."/>
            <person name="Joy A.A."/>
            <person name="Kay M."/>
            <person name="Keenan S.J."/>
            <person name="Kimberley A.M."/>
            <person name="King A."/>
            <person name="Laird G.K."/>
            <person name="Langford C."/>
            <person name="Lawlor S."/>
            <person name="Leongamornlert D.A."/>
            <person name="Leversha M."/>
            <person name="Lloyd C.R."/>
            <person name="Lloyd D.M."/>
            <person name="Loveland J.E."/>
            <person name="Lovell J."/>
            <person name="Martin S."/>
            <person name="Mashreghi-Mohammadi M."/>
            <person name="Maslen G.L."/>
            <person name="Matthews L."/>
            <person name="McCann O.T."/>
            <person name="McLaren S.J."/>
            <person name="McLay K."/>
            <person name="McMurray A."/>
            <person name="Moore M.J.F."/>
            <person name="Mullikin J.C."/>
            <person name="Niblett D."/>
            <person name="Nickerson T."/>
            <person name="Novik K.L."/>
            <person name="Oliver K."/>
            <person name="Overton-Larty E.K."/>
            <person name="Parker A."/>
            <person name="Patel R."/>
            <person name="Pearce A.V."/>
            <person name="Peck A.I."/>
            <person name="Phillimore B.J.C.T."/>
            <person name="Phillips S."/>
            <person name="Plumb R.W."/>
            <person name="Porter K.M."/>
            <person name="Ramsey Y."/>
            <person name="Ranby S.A."/>
            <person name="Rice C.M."/>
            <person name="Ross M.T."/>
            <person name="Searle S.M."/>
            <person name="Sehra H.K."/>
            <person name="Sheridan E."/>
            <person name="Skuce C.D."/>
            <person name="Smith S."/>
            <person name="Smith M."/>
            <person name="Spraggon L."/>
            <person name="Squares S.L."/>
            <person name="Steward C.A."/>
            <person name="Sycamore N."/>
            <person name="Tamlyn-Hall G."/>
            <person name="Tester J."/>
            <person name="Theaker A.J."/>
            <person name="Thomas D.W."/>
            <person name="Thorpe A."/>
            <person name="Tracey A."/>
            <person name="Tromans A."/>
            <person name="Tubby B."/>
            <person name="Wall M."/>
            <person name="Wallis J.M."/>
            <person name="West A.P."/>
            <person name="White S.S."/>
            <person name="Whitehead S.L."/>
            <person name="Whittaker H."/>
            <person name="Wild A."/>
            <person name="Willey D.J."/>
            <person name="Wilmer T.E."/>
            <person name="Wood J.M."/>
            <person name="Wray P.W."/>
            <person name="Wyatt J.C."/>
            <person name="Young L."/>
            <person name="Younger R.M."/>
            <person name="Bentley D.R."/>
            <person name="Coulson A."/>
            <person name="Durbin R.M."/>
            <person name="Hubbard T."/>
            <person name="Sulston J.E."/>
            <person name="Dunham I."/>
            <person name="Rogers J."/>
            <person name="Beck S."/>
        </authorList>
    </citation>
    <scope>NUCLEOTIDE SEQUENCE [LARGE SCALE GENOMIC DNA]</scope>
</reference>
<reference key="5">
    <citation type="submission" date="2005-07" db="EMBL/GenBank/DDBJ databases">
        <authorList>
            <person name="Mural R.J."/>
            <person name="Istrail S."/>
            <person name="Sutton G.G."/>
            <person name="Florea L."/>
            <person name="Halpern A.L."/>
            <person name="Mobarry C.M."/>
            <person name="Lippert R."/>
            <person name="Walenz B."/>
            <person name="Shatkay H."/>
            <person name="Dew I."/>
            <person name="Miller J.R."/>
            <person name="Flanigan M.J."/>
            <person name="Edwards N.J."/>
            <person name="Bolanos R."/>
            <person name="Fasulo D."/>
            <person name="Halldorsson B.V."/>
            <person name="Hannenhalli S."/>
            <person name="Turner R."/>
            <person name="Yooseph S."/>
            <person name="Lu F."/>
            <person name="Nusskern D.R."/>
            <person name="Shue B.C."/>
            <person name="Zheng X.H."/>
            <person name="Zhong F."/>
            <person name="Delcher A.L."/>
            <person name="Huson D.H."/>
            <person name="Kravitz S.A."/>
            <person name="Mouchard L."/>
            <person name="Reinert K."/>
            <person name="Remington K.A."/>
            <person name="Clark A.G."/>
            <person name="Waterman M.S."/>
            <person name="Eichler E.E."/>
            <person name="Adams M.D."/>
            <person name="Hunkapiller M.W."/>
            <person name="Myers E.W."/>
            <person name="Venter J.C."/>
        </authorList>
    </citation>
    <scope>NUCLEOTIDE SEQUENCE [LARGE SCALE GENOMIC DNA]</scope>
</reference>
<reference evidence="11" key="6">
    <citation type="journal article" date="1987" name="Kidney Int.">
        <title>Identification of a target antigen in human anti-tubular basement membrane nephritis.</title>
        <authorList>
            <person name="Fliger F.D."/>
            <person name="Wieslander J."/>
            <person name="Brentjens J.R."/>
            <person name="Andres G.A."/>
            <person name="Butkowski R.J."/>
        </authorList>
    </citation>
    <scope>IDENTIFICATION</scope>
    <scope>INVOLVEMENT IN TUBULOINTERSTITIAL NEPHRITIS</scope>
    <source>
        <tissue evidence="7">Kidney</tissue>
    </source>
</reference>
<reference evidence="11" key="7">
    <citation type="journal article" date="1991" name="Kidney Int.">
        <title>Distribution of tubulointerstitial nephritis antigen and evidence for multiple forms.</title>
        <authorList>
            <person name="Butkowski R.J."/>
            <person name="Kleppel M.M."/>
            <person name="Katz A."/>
            <person name="Michael A.F."/>
            <person name="Fish A.J."/>
        </authorList>
    </citation>
    <scope>TISSUE SPECIFICITY</scope>
    <scope>SUBCELLULAR LOCATION</scope>
</reference>
<reference evidence="11" key="8">
    <citation type="journal article" date="1992" name="Am. J. Med.">
        <title>Role of antibodies to tubulointerstitial nephritis antigen in human anti-tubular basement membrane nephritis associated with membranous nephropathy.</title>
        <authorList>
            <person name="Katz A."/>
            <person name="Fish A.J."/>
            <person name="Santamaria P."/>
            <person name="Nevins T.E."/>
            <person name="Kim Y."/>
            <person name="Butkowski R.J."/>
        </authorList>
    </citation>
    <scope>DISEASE</scope>
</reference>
<reference evidence="11" key="9">
    <citation type="journal article" date="1996" name="Kidney Int.">
        <title>Receptors in proximal tubular epithelial cells for tubulointerstitial nephritis antigen.</title>
        <authorList>
            <person name="Chen Y."/>
            <person name="Krishnamurti U."/>
            <person name="Wayner E.A."/>
            <person name="Michael A.F."/>
            <person name="Charonis A.S."/>
        </authorList>
    </citation>
    <scope>FUNCTION</scope>
</reference>
<reference evidence="11" key="10">
    <citation type="journal article" date="1998" name="Connect. Tissue Res.">
        <title>Tubulointerstitial nephritis antigen (TIN-ag) is expressed in distinct segments of the developing human nephron.</title>
        <authorList>
            <person name="Nelson T.R."/>
            <person name="Kim Y."/>
            <person name="Michael A.F."/>
            <person name="Butkowski R.J."/>
            <person name="Charonis A.S."/>
        </authorList>
    </citation>
    <scope>DEVELOPMENTAL STAGE</scope>
</reference>
<feature type="chain" id="PRO_0000050600" description="Tubulointerstitial nephritis antigen">
    <location>
        <begin position="1"/>
        <end position="476"/>
    </location>
</feature>
<feature type="domain" description="SMB" evidence="2">
    <location>
        <begin position="59"/>
        <end position="107"/>
    </location>
</feature>
<feature type="site" description="Cleavage; by furin" evidence="1">
    <location>
        <begin position="49"/>
        <end position="50"/>
    </location>
</feature>
<feature type="glycosylation site" description="N-linked (GlcNAc...) asparagine" evidence="1">
    <location>
        <position position="38"/>
    </location>
</feature>
<feature type="glycosylation site" description="N-linked (GlcNAc...) asparagine" evidence="1">
    <location>
        <position position="175"/>
    </location>
</feature>
<feature type="glycosylation site" description="N-linked (GlcNAc...) asparagine" evidence="1">
    <location>
        <position position="314"/>
    </location>
</feature>
<feature type="glycosylation site" description="N-linked (GlcNAc...) asparagine" evidence="1">
    <location>
        <position position="360"/>
    </location>
</feature>
<feature type="glycosylation site" description="N-linked (GlcNAc...) asparagine" evidence="1">
    <location>
        <position position="455"/>
    </location>
</feature>
<feature type="disulfide bond" description="Alternate" evidence="2">
    <location>
        <begin position="63"/>
        <end position="70"/>
    </location>
</feature>
<feature type="disulfide bond" description="Alternate" evidence="2">
    <location>
        <begin position="70"/>
        <end position="102"/>
    </location>
</feature>
<feature type="disulfide bond" description="Alternate" evidence="2">
    <location>
        <begin position="81"/>
        <end position="95"/>
    </location>
</feature>
<feature type="disulfide bond" description="Alternate" evidence="2">
    <location>
        <begin position="81"/>
        <end position="83"/>
    </location>
</feature>
<feature type="disulfide bond" evidence="2">
    <location>
        <begin position="87"/>
        <end position="94"/>
    </location>
</feature>
<feature type="disulfide bond" description="Alternate" evidence="2">
    <location>
        <begin position="95"/>
        <end position="102"/>
    </location>
</feature>
<feature type="splice variant" id="VSP_050567" description="In isoform 2." evidence="10">
    <location>
        <begin position="119"/>
        <end position="169"/>
    </location>
</feature>
<feature type="splice variant" id="VSP_050568" description="In isoform 2." evidence="10">
    <location>
        <begin position="209"/>
        <end position="300"/>
    </location>
</feature>
<feature type="sequence variant" id="VAR_047091" description="In dbSNP:rs16885197.">
    <original>T</original>
    <variation>A</variation>
    <location>
        <position position="3"/>
    </location>
</feature>
<feature type="sequence variant" id="VAR_047092" description="In dbSNP:rs2297980.">
    <original>Q</original>
    <variation>R</variation>
    <location>
        <position position="22"/>
    </location>
</feature>
<feature type="sequence variant" id="VAR_047093" description="In dbSNP:rs1058768." evidence="4 5">
    <original>S</original>
    <variation>P</variation>
    <location>
        <position position="158"/>
    </location>
</feature>
<feature type="sequence variant" id="VAR_047094" description="In dbSNP:rs34011963.">
    <original>V</original>
    <variation>I</variation>
    <location>
        <position position="413"/>
    </location>
</feature>
<feature type="sequence variant" id="VAR_047095" description="In dbSNP:rs3736352.">
    <original>I</original>
    <variation>L</variation>
    <location>
        <position position="433"/>
    </location>
</feature>
<feature type="sequence conflict" description="In Ref. 2; AAF08931/AAF08932." evidence="11" ref="2">
    <original>IL</original>
    <variation>FS</variation>
    <location>
        <begin position="7"/>
        <end position="8"/>
    </location>
</feature>
<feature type="sequence conflict" description="In Ref. 2; AAF08932." evidence="11" ref="2">
    <original>N</original>
    <variation>I</variation>
    <location>
        <position position="175"/>
    </location>
</feature>
<feature type="sequence conflict" description="In Ref. 1; BAA84949." evidence="11" ref="1">
    <original>P</original>
    <variation>L</variation>
    <location>
        <position position="199"/>
    </location>
</feature>
<feature type="sequence conflict" description="In Ref. 2; AAF08931/AAF08932." evidence="11" ref="2">
    <original>H</original>
    <variation>D</variation>
    <location>
        <position position="333"/>
    </location>
</feature>
<feature type="sequence conflict" description="In Ref. 1; BAA84949." evidence="11" ref="1">
    <original>R</original>
    <variation>H</variation>
    <location>
        <position position="381"/>
    </location>
</feature>
<feature type="sequence conflict" description="In Ref. 2; AAF08932." evidence="11" ref="2">
    <original>L</original>
    <variation>R</variation>
    <location>
        <position position="421"/>
    </location>
</feature>
<feature type="sequence conflict" description="In Ref. 2; AAF08931/AAF08932." evidence="11" ref="2">
    <original>S</original>
    <variation>F</variation>
    <location>
        <position position="437"/>
    </location>
</feature>
<feature type="sequence conflict" description="In Ref. 2; AAF08931/AAF08932." evidence="11" ref="2">
    <original>I</original>
    <variation>V</variation>
    <location>
        <position position="463"/>
    </location>
</feature>
<organism evidence="12">
    <name type="scientific">Homo sapiens</name>
    <name type="common">Human</name>
    <dbReference type="NCBI Taxonomy" id="9606"/>
    <lineage>
        <taxon>Eukaryota</taxon>
        <taxon>Metazoa</taxon>
        <taxon>Chordata</taxon>
        <taxon>Craniata</taxon>
        <taxon>Vertebrata</taxon>
        <taxon>Euteleostomi</taxon>
        <taxon>Mammalia</taxon>
        <taxon>Eutheria</taxon>
        <taxon>Euarchontoglires</taxon>
        <taxon>Primates</taxon>
        <taxon>Haplorrhini</taxon>
        <taxon>Catarrhini</taxon>
        <taxon>Hominidae</taxon>
        <taxon>Homo</taxon>
    </lineage>
</organism>
<gene>
    <name type="primary">TINAG</name>
</gene>
<comment type="function">
    <text evidence="8">Mediates adhesion of proximal tubule epithelial cells via integrins alpha3-beta1 and alphaV-beta3. This is a non catalytic peptidase C1 family protein.</text>
</comment>
<comment type="subcellular location">
    <subcellularLocation>
        <location evidence="5 6">Secreted</location>
        <location evidence="5 6">Extracellular space</location>
        <location evidence="5 6">Extracellular matrix</location>
        <location evidence="5 6">Basement membrane</location>
    </subcellularLocation>
</comment>
<comment type="alternative products">
    <event type="alternative splicing"/>
    <isoform>
        <id>Q9UJW2-1</id>
        <name>1</name>
        <name evidence="5">TIN1</name>
        <sequence type="displayed"/>
    </isoform>
    <isoform>
        <id>Q9UJW2-2</id>
        <name>2</name>
        <name evidence="5">TIN2</name>
        <sequence type="described" ref="VSP_050567 VSP_050568"/>
    </isoform>
</comment>
<comment type="tissue specificity">
    <text evidence="4 5 6">Expressed in the kidney cortex, small intestine and cornea.</text>
</comment>
<comment type="developmental stage">
    <text evidence="9">Initially observed in the Bowman capsule during early glomerular capillary loop formation in the kidney. In more developmentally mature glomeruli, following transition from early to mid-capillary loop stage, expression is higher in the proximal tubular basement membrane than in the distal basement membrane and Bowman capsule.</text>
</comment>
<comment type="PTM">
    <text>It has been suggested that the active SMB domain may be permitted considerable disulfide bond heterogeneity or variability, thus 2 alternate disulfide patterns based on 3D structures are described with 1 disulfide bond conserved in both.</text>
</comment>
<comment type="miscellaneous">
    <text>Antibodies against TINAG are found in sera of patients with tubulointerstitial nephritis, a rare autoimmune disorder that causes acute and chronic renal injury.</text>
</comment>
<comment type="miscellaneous">
    <molecule>Isoform 1</molecule>
    <text>Major isoform.</text>
</comment>
<comment type="similarity">
    <text evidence="3">Belongs to the peptidase C1 family.</text>
</comment>
<name>TINAG_HUMAN</name>
<keyword id="KW-0025">Alternative splicing</keyword>
<keyword id="KW-0084">Basement membrane</keyword>
<keyword id="KW-0130">Cell adhesion</keyword>
<keyword id="KW-1015">Disulfide bond</keyword>
<keyword id="KW-0272">Extracellular matrix</keyword>
<keyword id="KW-0325">Glycoprotein</keyword>
<keyword id="KW-1267">Proteomics identification</keyword>
<keyword id="KW-1185">Reference proteome</keyword>
<keyword id="KW-0964">Secreted</keyword>
<protein>
    <recommendedName>
        <fullName>Tubulointerstitial nephritis antigen</fullName>
        <shortName>TIN-Ag</shortName>
    </recommendedName>
</protein>
<sequence length="476" mass="54605">MWTGYKILIFSYLTTEIWMEKQYLSQREVDLEAYFTRNHTVLQGTRFKRAIFQGQYCRNFGCCEDRDDGCVTEFYAANALCYCDKFCDRENSDCCPDYKSFCREEKEWPPHTQPWYPEGCFKDGQHYEEGSVIKENCNSCTCSGQQWKCSQHVCLVRSELIEQVNKGDYGWTAQNYSQFWGMTLEDGFKFRLGTLPPSPMLLSMNEMTASLPATTDLPEFFVASYKWPGWTHGPLDQKNCAASWAFSTASVAADRIAIQSKGRYTANLSPQNLISCCAKNRHGCNSGSIDRAWWYLRKRGLVSHACYPLFKDQNATNNGCAMASRSDGRGKRHATKPCPNNVEKSNRIYQCSPPYRVSSNETEIMKEIMQNGPVQAIMQVREDFFHYKTGIYRHVTSTNKESEKYRKLQTHAVKLTGWGTLRGAQGQKEKFWIAANSWGKSWGENGYFRILRGVNESDIEKLIIAAWGQLTSSDEP</sequence>